<accession>P0CB54</accession>
<accession>A0A1D8PCT8</accession>
<accession>Q5AI88</accession>
<dbReference type="EC" id="3.6.-.-" evidence="1"/>
<dbReference type="EMBL" id="CP017623">
    <property type="protein sequence ID" value="AOW25957.1"/>
    <property type="molecule type" value="Genomic_DNA"/>
</dbReference>
<dbReference type="RefSeq" id="XP_721464.1">
    <property type="nucleotide sequence ID" value="XM_716371.1"/>
</dbReference>
<dbReference type="SMR" id="P0CB54"/>
<dbReference type="FunCoup" id="P0CB54">
    <property type="interactions" value="1027"/>
</dbReference>
<dbReference type="STRING" id="237561.P0CB54"/>
<dbReference type="EnsemblFungi" id="C1_02760W_A-T">
    <property type="protein sequence ID" value="C1_02760W_A-T-p1"/>
    <property type="gene ID" value="C1_02760W_A"/>
</dbReference>
<dbReference type="GeneID" id="3636870"/>
<dbReference type="KEGG" id="cal:CAALFM_C102760WA"/>
<dbReference type="CGD" id="CAL0000195169">
    <property type="gene designation" value="orf19.10482"/>
</dbReference>
<dbReference type="VEuPathDB" id="FungiDB:C1_02760W_A"/>
<dbReference type="eggNOG" id="KOG2825">
    <property type="taxonomic scope" value="Eukaryota"/>
</dbReference>
<dbReference type="HOGENOM" id="CLU_040761_0_0_1"/>
<dbReference type="InParanoid" id="P0CB54"/>
<dbReference type="OMA" id="MDAPYEF"/>
<dbReference type="OrthoDB" id="1770at2759"/>
<dbReference type="PRO" id="PR:P0CB54"/>
<dbReference type="Proteomes" id="UP000000559">
    <property type="component" value="Chromosome 1"/>
</dbReference>
<dbReference type="GO" id="GO:0043529">
    <property type="term" value="C:GET complex"/>
    <property type="evidence" value="ECO:0000318"/>
    <property type="project" value="GO_Central"/>
</dbReference>
<dbReference type="GO" id="GO:0005794">
    <property type="term" value="C:Golgi apparatus"/>
    <property type="evidence" value="ECO:0007669"/>
    <property type="project" value="UniProtKB-SubCell"/>
</dbReference>
<dbReference type="GO" id="GO:0005524">
    <property type="term" value="F:ATP binding"/>
    <property type="evidence" value="ECO:0007669"/>
    <property type="project" value="UniProtKB-UniRule"/>
</dbReference>
<dbReference type="GO" id="GO:0016887">
    <property type="term" value="F:ATP hydrolysis activity"/>
    <property type="evidence" value="ECO:0000318"/>
    <property type="project" value="GO_Central"/>
</dbReference>
<dbReference type="GO" id="GO:0046872">
    <property type="term" value="F:metal ion binding"/>
    <property type="evidence" value="ECO:0007669"/>
    <property type="project" value="UniProtKB-KW"/>
</dbReference>
<dbReference type="GO" id="GO:0071816">
    <property type="term" value="P:tail-anchored membrane protein insertion into ER membrane"/>
    <property type="evidence" value="ECO:0000318"/>
    <property type="project" value="GO_Central"/>
</dbReference>
<dbReference type="CDD" id="cd02035">
    <property type="entry name" value="ArsA"/>
    <property type="match status" value="1"/>
</dbReference>
<dbReference type="FunFam" id="3.40.50.300:FF:001359">
    <property type="entry name" value="ATPase GET3"/>
    <property type="match status" value="1"/>
</dbReference>
<dbReference type="Gene3D" id="3.40.50.300">
    <property type="entry name" value="P-loop containing nucleotide triphosphate hydrolases"/>
    <property type="match status" value="1"/>
</dbReference>
<dbReference type="HAMAP" id="MF_03112">
    <property type="entry name" value="Asna1_Get3"/>
    <property type="match status" value="1"/>
</dbReference>
<dbReference type="InterPro" id="IPR025723">
    <property type="entry name" value="Anion-transp_ATPase-like_dom"/>
</dbReference>
<dbReference type="InterPro" id="IPR016300">
    <property type="entry name" value="ATPase_ArsA/GET3"/>
</dbReference>
<dbReference type="InterPro" id="IPR027542">
    <property type="entry name" value="ATPase_ArsA/GET3_euk"/>
</dbReference>
<dbReference type="InterPro" id="IPR027417">
    <property type="entry name" value="P-loop_NTPase"/>
</dbReference>
<dbReference type="NCBIfam" id="TIGR00345">
    <property type="entry name" value="GET3_arsA_TRC40"/>
    <property type="match status" value="1"/>
</dbReference>
<dbReference type="PANTHER" id="PTHR10803">
    <property type="entry name" value="ARSENICAL PUMP-DRIVING ATPASE ARSENITE-TRANSLOCATING ATPASE"/>
    <property type="match status" value="1"/>
</dbReference>
<dbReference type="PANTHER" id="PTHR10803:SF3">
    <property type="entry name" value="ATPASE GET3"/>
    <property type="match status" value="1"/>
</dbReference>
<dbReference type="Pfam" id="PF02374">
    <property type="entry name" value="ArsA_ATPase"/>
    <property type="match status" value="1"/>
</dbReference>
<dbReference type="SUPFAM" id="SSF52540">
    <property type="entry name" value="P-loop containing nucleoside triphosphate hydrolases"/>
    <property type="match status" value="1"/>
</dbReference>
<proteinExistence type="inferred from homology"/>
<name>GET3_CANAL</name>
<feature type="chain" id="PRO_0000388196" description="ATPase GET3">
    <location>
        <begin position="1"/>
        <end position="350"/>
    </location>
</feature>
<feature type="active site" evidence="1">
    <location>
        <position position="57"/>
    </location>
</feature>
<feature type="binding site" evidence="1">
    <location>
        <begin position="26"/>
        <end position="33"/>
    </location>
    <ligand>
        <name>ATP</name>
        <dbReference type="ChEBI" id="CHEBI:30616"/>
    </ligand>
</feature>
<feature type="binding site" evidence="1">
    <location>
        <position position="243"/>
    </location>
    <ligand>
        <name>ATP</name>
        <dbReference type="ChEBI" id="CHEBI:30616"/>
    </ligand>
</feature>
<feature type="binding site" evidence="1">
    <location>
        <position position="270"/>
    </location>
    <ligand>
        <name>ATP</name>
        <dbReference type="ChEBI" id="CHEBI:30616"/>
    </ligand>
</feature>
<feature type="binding site" evidence="1">
    <location>
        <position position="282"/>
    </location>
    <ligand>
        <name>Zn(2+)</name>
        <dbReference type="ChEBI" id="CHEBI:29105"/>
        <note>ligand shared between dimeric partners</note>
    </ligand>
</feature>
<feature type="binding site" evidence="1">
    <location>
        <position position="285"/>
    </location>
    <ligand>
        <name>Zn(2+)</name>
        <dbReference type="ChEBI" id="CHEBI:29105"/>
        <note>ligand shared between dimeric partners</note>
    </ligand>
</feature>
<reference key="1">
    <citation type="journal article" date="2004" name="Proc. Natl. Acad. Sci. U.S.A.">
        <title>The diploid genome sequence of Candida albicans.</title>
        <authorList>
            <person name="Jones T."/>
            <person name="Federspiel N.A."/>
            <person name="Chibana H."/>
            <person name="Dungan J."/>
            <person name="Kalman S."/>
            <person name="Magee B.B."/>
            <person name="Newport G."/>
            <person name="Thorstenson Y.R."/>
            <person name="Agabian N."/>
            <person name="Magee P.T."/>
            <person name="Davis R.W."/>
            <person name="Scherer S."/>
        </authorList>
    </citation>
    <scope>NUCLEOTIDE SEQUENCE [LARGE SCALE GENOMIC DNA]</scope>
    <source>
        <strain>SC5314 / ATCC MYA-2876</strain>
    </source>
</reference>
<reference key="2">
    <citation type="journal article" date="2007" name="Genome Biol.">
        <title>Assembly of the Candida albicans genome into sixteen supercontigs aligned on the eight chromosomes.</title>
        <authorList>
            <person name="van het Hoog M."/>
            <person name="Rast T.J."/>
            <person name="Martchenko M."/>
            <person name="Grindle S."/>
            <person name="Dignard D."/>
            <person name="Hogues H."/>
            <person name="Cuomo C."/>
            <person name="Berriman M."/>
            <person name="Scherer S."/>
            <person name="Magee B.B."/>
            <person name="Whiteway M."/>
            <person name="Chibana H."/>
            <person name="Nantel A."/>
            <person name="Magee P.T."/>
        </authorList>
    </citation>
    <scope>GENOME REANNOTATION</scope>
    <source>
        <strain>SC5314 / ATCC MYA-2876</strain>
    </source>
</reference>
<reference key="3">
    <citation type="journal article" date="2013" name="Genome Biol.">
        <title>Assembly of a phased diploid Candida albicans genome facilitates allele-specific measurements and provides a simple model for repeat and indel structure.</title>
        <authorList>
            <person name="Muzzey D."/>
            <person name="Schwartz K."/>
            <person name="Weissman J.S."/>
            <person name="Sherlock G."/>
        </authorList>
    </citation>
    <scope>NUCLEOTIDE SEQUENCE [LARGE SCALE GENOMIC DNA]</scope>
    <scope>GENOME REANNOTATION</scope>
    <source>
        <strain>SC5314 / ATCC MYA-2876</strain>
    </source>
</reference>
<organism>
    <name type="scientific">Candida albicans (strain SC5314 / ATCC MYA-2876)</name>
    <name type="common">Yeast</name>
    <dbReference type="NCBI Taxonomy" id="237561"/>
    <lineage>
        <taxon>Eukaryota</taxon>
        <taxon>Fungi</taxon>
        <taxon>Dikarya</taxon>
        <taxon>Ascomycota</taxon>
        <taxon>Saccharomycotina</taxon>
        <taxon>Pichiomycetes</taxon>
        <taxon>Debaryomycetaceae</taxon>
        <taxon>Candida/Lodderomyces clade</taxon>
        <taxon>Candida</taxon>
    </lineage>
</organism>
<protein>
    <recommendedName>
        <fullName evidence="1">ATPase GET3</fullName>
        <ecNumber evidence="1">3.6.-.-</ecNumber>
    </recommendedName>
    <alternativeName>
        <fullName evidence="1">Arsenical pump-driving ATPase</fullName>
    </alternativeName>
    <alternativeName>
        <fullName evidence="1">Arsenite-stimulated ATPase</fullName>
    </alternativeName>
    <alternativeName>
        <fullName evidence="1">Golgi to ER traffic protein 3</fullName>
    </alternativeName>
    <alternativeName>
        <fullName evidence="1">Guided entry of tail-anchored proteins 3</fullName>
    </alternativeName>
</protein>
<gene>
    <name evidence="1" type="primary">GET3</name>
    <name type="ordered locus">CAALFM_C102760WA</name>
    <name type="ORF">CaO19.10482</name>
    <name type="ORF">CaO19.2965</name>
</gene>
<keyword id="KW-0067">ATP-binding</keyword>
<keyword id="KW-0963">Cytoplasm</keyword>
<keyword id="KW-0256">Endoplasmic reticulum</keyword>
<keyword id="KW-0333">Golgi apparatus</keyword>
<keyword id="KW-0378">Hydrolase</keyword>
<keyword id="KW-0479">Metal-binding</keyword>
<keyword id="KW-0547">Nucleotide-binding</keyword>
<keyword id="KW-1185">Reference proteome</keyword>
<keyword id="KW-0813">Transport</keyword>
<keyword id="KW-0862">Zinc</keyword>
<sequence length="350" mass="39604">MDFELEPSLEELIKQDTLKWIFVGGKGGVGKTTTSSSIAVQLALQHPNDEFLLISTDPAHNLSDAFCQKFGKDARKVEGLSNLSCMEIDPEAAMSDLQQQAQQYNNDPNDPLKSIMNDMTGSIPGIDEALSFMEVLKHIKNQKVNESDDSKDKISYRTIIFDTAPTGHTLRFLQLPSTLQKLLGKFQQLSGKLGPMMSMLGGGGQGQQDMFAKLNEVQKNVEEVNEQFTNPDLTTFVCVCISEFLSLYETERMIQELMSYQMDVNSIVVNQLLFADDDENPCKRCVARWKMQKKYLDQMAELYEDYHLVKMPLLGSEIRGVENLKKFSKFLIKPYDPKVDRGIITDLKEQ</sequence>
<comment type="function">
    <text evidence="1">ATPase required for the post-translational delivery of tail-anchored (TA) proteins to the endoplasmic reticulum. Recognizes and selectively binds the transmembrane domain of TA proteins in the cytosol. This complex then targets to the endoplasmic reticulum by membrane-bound receptors GET1 and GET2, where the tail-anchored protein is released for insertion. This process is regulated by ATP binding and hydrolysis. ATP binding drives the homodimer towards the closed dimer state, facilitating recognition of newly synthesized TA membrane proteins. ATP hydrolysis is required for insertion. Subsequently, the homodimer reverts towards the open dimer state, lowering its affinity for the GET1-GET2 receptor, and returning it to the cytosol to initiate a new round of targeting. Cooperates with the HDEL receptor ERD2 to mediate the ATP-dependent retrieval of resident ER proteins that contain a C-terminal H-D-E-L retention signal from the Golgi to the ER. Involved in low-level resistance to the oxyanions arsenite and arsenate, and in heat tolerance.</text>
</comment>
<comment type="subunit">
    <text evidence="1">Homodimer. Component of the Golgi to ER traffic (GET) complex, which is composed of GET1, GET2 and GET3. Within the complex, GET1 and GET2 form a heterotetramer which is stabilized by phosphatidylinositol binding and which binds to the GET3 homodimer. Interacts with the chloride channel protein GEF1.</text>
</comment>
<comment type="subcellular location">
    <subcellularLocation>
        <location evidence="1">Cytoplasm</location>
    </subcellularLocation>
    <subcellularLocation>
        <location evidence="1">Endoplasmic reticulum</location>
    </subcellularLocation>
    <subcellularLocation>
        <location evidence="1">Golgi apparatus</location>
    </subcellularLocation>
    <text evidence="1">GET1 and GET2 are required for targeting GET3 to the endoplasmic reticulum.</text>
</comment>
<comment type="similarity">
    <text evidence="1">Belongs to the arsA ATPase family.</text>
</comment>
<evidence type="ECO:0000255" key="1">
    <source>
        <dbReference type="HAMAP-Rule" id="MF_03112"/>
    </source>
</evidence>